<organism>
    <name type="scientific">Staphylococcus aureus (strain NCTC 8325 / PS 47)</name>
    <dbReference type="NCBI Taxonomy" id="93061"/>
    <lineage>
        <taxon>Bacteria</taxon>
        <taxon>Bacillati</taxon>
        <taxon>Bacillota</taxon>
        <taxon>Bacilli</taxon>
        <taxon>Bacillales</taxon>
        <taxon>Staphylococcaceae</taxon>
        <taxon>Staphylococcus</taxon>
    </lineage>
</organism>
<proteinExistence type="evidence at protein level"/>
<gene>
    <name evidence="5" type="primary">ssl7</name>
    <name type="ordered locus">SAOUHSC_00392</name>
</gene>
<dbReference type="EMBL" id="CP000253">
    <property type="protein sequence ID" value="ABD29555.1"/>
    <property type="molecule type" value="Genomic_DNA"/>
</dbReference>
<dbReference type="RefSeq" id="WP_000769836.1">
    <property type="nucleotide sequence ID" value="NZ_LS483365.1"/>
</dbReference>
<dbReference type="RefSeq" id="YP_498979.1">
    <property type="nucleotide sequence ID" value="NC_007795.1"/>
</dbReference>
<dbReference type="SMR" id="Q2G2Y0"/>
<dbReference type="STRING" id="93061.SAOUHSC_00392"/>
<dbReference type="PaxDb" id="1280-SAXN108_0483"/>
<dbReference type="GeneID" id="3919127"/>
<dbReference type="KEGG" id="sao:SAOUHSC_00392"/>
<dbReference type="PATRIC" id="fig|93061.5.peg.360"/>
<dbReference type="eggNOG" id="ENOG503054K">
    <property type="taxonomic scope" value="Bacteria"/>
</dbReference>
<dbReference type="HOGENOM" id="CLU_054950_1_0_9"/>
<dbReference type="OrthoDB" id="2413502at2"/>
<dbReference type="Proteomes" id="UP000008816">
    <property type="component" value="Chromosome"/>
</dbReference>
<dbReference type="GO" id="GO:0005576">
    <property type="term" value="C:extracellular region"/>
    <property type="evidence" value="ECO:0007669"/>
    <property type="project" value="UniProtKB-SubCell"/>
</dbReference>
<dbReference type="Gene3D" id="2.40.50.110">
    <property type="match status" value="1"/>
</dbReference>
<dbReference type="Gene3D" id="3.10.20.120">
    <property type="match status" value="1"/>
</dbReference>
<dbReference type="InterPro" id="IPR008992">
    <property type="entry name" value="Enterotoxin"/>
</dbReference>
<dbReference type="InterPro" id="IPR015282">
    <property type="entry name" value="SSL_OB"/>
</dbReference>
<dbReference type="InterPro" id="IPR006126">
    <property type="entry name" value="Staph/Strept_toxin_CS"/>
</dbReference>
<dbReference type="InterPro" id="IPR008375">
    <property type="entry name" value="Staph_exotoxin"/>
</dbReference>
<dbReference type="InterPro" id="IPR016091">
    <property type="entry name" value="SuperAg_toxin_C"/>
</dbReference>
<dbReference type="InterPro" id="IPR013307">
    <property type="entry name" value="Superantigen_bac"/>
</dbReference>
<dbReference type="InterPro" id="IPR006123">
    <property type="entry name" value="Toxin_b-grasp_Staph/Strep"/>
</dbReference>
<dbReference type="NCBIfam" id="NF009887">
    <property type="entry name" value="PRK13346.1"/>
    <property type="match status" value="1"/>
</dbReference>
<dbReference type="Pfam" id="PF09199">
    <property type="entry name" value="SSL_OB"/>
    <property type="match status" value="1"/>
</dbReference>
<dbReference type="Pfam" id="PF02876">
    <property type="entry name" value="Stap_Strp_tox_C"/>
    <property type="match status" value="1"/>
</dbReference>
<dbReference type="PRINTS" id="PR01898">
    <property type="entry name" value="SAGSUPRFAMLY"/>
</dbReference>
<dbReference type="PRINTS" id="PR01800">
    <property type="entry name" value="STAPHEXOTOXN"/>
</dbReference>
<dbReference type="PRINTS" id="PR01501">
    <property type="entry name" value="TOXICSSTOXIN"/>
</dbReference>
<dbReference type="SUPFAM" id="SSF50203">
    <property type="entry name" value="Bacterial enterotoxins"/>
    <property type="match status" value="1"/>
</dbReference>
<dbReference type="SUPFAM" id="SSF54334">
    <property type="entry name" value="Superantigen toxins, C-terminal domain"/>
    <property type="match status" value="1"/>
</dbReference>
<dbReference type="PROSITE" id="PS00278">
    <property type="entry name" value="STAPH_STREP_TOXIN_2"/>
    <property type="match status" value="1"/>
</dbReference>
<sequence>MKLKTLAKATLALGLLTTGVITSEGQAVQAKEKQERVQHLYDIKDLHRYYSSESFEFSNISGKVENYNGSNVVRFNQENQNHQLFLLGKDKEKYKEGIEGKDVFVVKELIDPNGRLSTVGGVTKKNNKSSETNTHLFVNKVYGGNLDASIDSFSINKEEVSLKELDFKIRQHLVKNYGLYKGTTKYGKITINLKDGEKQEIDLGDKLQFERMGDVLNSKDINKIEVTLKQI</sequence>
<reference key="1">
    <citation type="book" date="2006" name="Gram positive pathogens, 2nd edition">
        <title>The Staphylococcus aureus NCTC 8325 genome.</title>
        <editorList>
            <person name="Fischetti V."/>
            <person name="Novick R."/>
            <person name="Ferretti J."/>
            <person name="Portnoy D."/>
            <person name="Rood J."/>
        </editorList>
        <authorList>
            <person name="Gillaspy A.F."/>
            <person name="Worrell V."/>
            <person name="Orvis J."/>
            <person name="Roe B.A."/>
            <person name="Dyer D.W."/>
            <person name="Iandolo J.J."/>
        </authorList>
    </citation>
    <scope>NUCLEOTIDE SEQUENCE [LARGE SCALE GENOMIC DNA]</scope>
    <source>
        <strain>NCTC 8325 / PS 47</strain>
    </source>
</reference>
<reference key="2">
    <citation type="journal article" date="2005" name="J. Immunol.">
        <title>The staphylococcal superantigen-like protein 7 binds IgA and complement C5 and inhibits IgA-Fc alpha RI binding and serum killing of bacteria.</title>
        <authorList>
            <person name="Langley R."/>
            <person name="Wines B."/>
            <person name="Willoughby N."/>
            <person name="Basu I."/>
            <person name="Proft T."/>
            <person name="Fraser J.D."/>
        </authorList>
    </citation>
    <scope>FUNCTION</scope>
    <scope>INTERACTION WITH HOST COMPLEMENT C5</scope>
    <source>
        <strain>GL1</strain>
    </source>
</reference>
<reference key="3">
    <citation type="journal article" date="2010" name="Cell. Microbiol.">
        <title>Functional basis for complement evasion by staphylococcal superantigen-like 7.</title>
        <authorList>
            <person name="Bestebroer J."/>
            <person name="Aerts P.C."/>
            <person name="Rooijakkers S.H."/>
            <person name="Pandey M.K."/>
            <person name="Koehl J."/>
            <person name="van Strijp J.A."/>
            <person name="de Haas C.J."/>
        </authorList>
    </citation>
    <scope>FUNCTION</scope>
    <scope>INTERACTION WITH HOST COMPLEMENT C5</scope>
    <scope>MUTAGENESIS OF ASN-68; LEU-109; PRO-112 AND ASP-147</scope>
    <source>
        <strain>NCTC 8325 / PS 47</strain>
    </source>
</reference>
<accession>Q2G2Y0</accession>
<protein>
    <recommendedName>
        <fullName evidence="5">Staphylococcal superantigen-like 7</fullName>
    </recommendedName>
</protein>
<evidence type="ECO:0000250" key="1">
    <source>
        <dbReference type="UniProtKB" id="Q2G1S8"/>
    </source>
</evidence>
<evidence type="ECO:0000255" key="2"/>
<evidence type="ECO:0000269" key="3">
    <source>
    </source>
</evidence>
<evidence type="ECO:0000269" key="4">
    <source>
    </source>
</evidence>
<evidence type="ECO:0000303" key="5">
    <source>
    </source>
</evidence>
<evidence type="ECO:0000305" key="6"/>
<name>SSL7_STAA8</name>
<keyword id="KW-1185">Reference proteome</keyword>
<keyword id="KW-0964">Secreted</keyword>
<keyword id="KW-0732">Signal</keyword>
<keyword id="KW-0843">Virulence</keyword>
<feature type="signal peptide" evidence="2">
    <location>
        <begin position="1"/>
        <end position="30"/>
    </location>
</feature>
<feature type="chain" id="PRO_5002613391" description="Staphylococcal superantigen-like 7" evidence="2">
    <location>
        <begin position="31"/>
        <end position="231"/>
    </location>
</feature>
<feature type="mutagenesis site" description="Loss of host IgA binding; when associated with A-109 and A-112." evidence="4">
    <original>N</original>
    <variation>Y</variation>
    <location>
        <position position="68"/>
    </location>
</feature>
<feature type="mutagenesis site" description="Loss of host IgA binding; when associated with Y-68 and A-112." evidence="4">
    <original>L</original>
    <variation>A</variation>
    <location>
        <position position="109"/>
    </location>
</feature>
<feature type="mutagenesis site" description="Loss of host IgA binding; when associated with Y-68 and A-109." evidence="4">
    <original>P</original>
    <variation>A</variation>
    <location>
        <position position="112"/>
    </location>
</feature>
<feature type="mutagenesis site" description="Loss of host complement C5 binding." evidence="4">
    <original>D</original>
    <variation>K</variation>
    <location>
        <position position="147"/>
    </location>
</feature>
<comment type="function">
    <text evidence="3 4">Plays a role in the inhibition of host complement-mediated lysis and serum bactericidal activity by interacting with complement component C5 (PubMed:15728504). Affects all three pathways of complement activation and inhibits the cleavage of C5 by preventing its binding to C5 convertases. In turn, prevents C5a-mediated neutrophil migration (PubMed:20545943).</text>
</comment>
<comment type="subunit">
    <text evidence="3 4">Interacts with host IgA and complement C5; these interactions inhibits complement activation.</text>
</comment>
<comment type="subcellular location">
    <subcellularLocation>
        <location evidence="1">Secreted</location>
    </subcellularLocation>
</comment>
<comment type="similarity">
    <text evidence="6">Belongs to the staphylococcal/streptococcal toxin family.</text>
</comment>